<dbReference type="EMBL" id="CP000003">
    <property type="protein sequence ID" value="AAT86447.1"/>
    <property type="molecule type" value="Genomic_DNA"/>
</dbReference>
<dbReference type="RefSeq" id="WP_011184190.1">
    <property type="nucleotide sequence ID" value="NC_006086.1"/>
</dbReference>
<dbReference type="SMR" id="Q5XDR6"/>
<dbReference type="KEGG" id="spa:M6_Spy0312"/>
<dbReference type="HOGENOM" id="CLU_108412_0_0_9"/>
<dbReference type="Proteomes" id="UP000001167">
    <property type="component" value="Chromosome"/>
</dbReference>
<dbReference type="GO" id="GO:0005524">
    <property type="term" value="F:ATP binding"/>
    <property type="evidence" value="ECO:0007669"/>
    <property type="project" value="UniProtKB-KW"/>
</dbReference>
<dbReference type="GO" id="GO:0003677">
    <property type="term" value="F:DNA binding"/>
    <property type="evidence" value="ECO:0007669"/>
    <property type="project" value="UniProtKB-KW"/>
</dbReference>
<dbReference type="GO" id="GO:0008270">
    <property type="term" value="F:zinc ion binding"/>
    <property type="evidence" value="ECO:0007669"/>
    <property type="project" value="UniProtKB-UniRule"/>
</dbReference>
<dbReference type="GO" id="GO:0045892">
    <property type="term" value="P:negative regulation of DNA-templated transcription"/>
    <property type="evidence" value="ECO:0007669"/>
    <property type="project" value="UniProtKB-UniRule"/>
</dbReference>
<dbReference type="HAMAP" id="MF_00440">
    <property type="entry name" value="NrdR"/>
    <property type="match status" value="1"/>
</dbReference>
<dbReference type="InterPro" id="IPR005144">
    <property type="entry name" value="ATP-cone_dom"/>
</dbReference>
<dbReference type="InterPro" id="IPR055173">
    <property type="entry name" value="NrdR-like_N"/>
</dbReference>
<dbReference type="InterPro" id="IPR003796">
    <property type="entry name" value="RNR_NrdR-like"/>
</dbReference>
<dbReference type="NCBIfam" id="TIGR00244">
    <property type="entry name" value="transcriptional regulator NrdR"/>
    <property type="match status" value="1"/>
</dbReference>
<dbReference type="PANTHER" id="PTHR30455">
    <property type="entry name" value="TRANSCRIPTIONAL REPRESSOR NRDR"/>
    <property type="match status" value="1"/>
</dbReference>
<dbReference type="PANTHER" id="PTHR30455:SF2">
    <property type="entry name" value="TRANSCRIPTIONAL REPRESSOR NRDR"/>
    <property type="match status" value="1"/>
</dbReference>
<dbReference type="Pfam" id="PF03477">
    <property type="entry name" value="ATP-cone"/>
    <property type="match status" value="1"/>
</dbReference>
<dbReference type="Pfam" id="PF22811">
    <property type="entry name" value="Zn_ribbon_NrdR"/>
    <property type="match status" value="1"/>
</dbReference>
<dbReference type="PROSITE" id="PS51161">
    <property type="entry name" value="ATP_CONE"/>
    <property type="match status" value="1"/>
</dbReference>
<evidence type="ECO:0000255" key="1">
    <source>
        <dbReference type="HAMAP-Rule" id="MF_00440"/>
    </source>
</evidence>
<keyword id="KW-0067">ATP-binding</keyword>
<keyword id="KW-0238">DNA-binding</keyword>
<keyword id="KW-0479">Metal-binding</keyword>
<keyword id="KW-0547">Nucleotide-binding</keyword>
<keyword id="KW-0678">Repressor</keyword>
<keyword id="KW-0804">Transcription</keyword>
<keyword id="KW-0805">Transcription regulation</keyword>
<keyword id="KW-0862">Zinc</keyword>
<keyword id="KW-0863">Zinc-finger</keyword>
<gene>
    <name evidence="1" type="primary">nrdR</name>
    <name type="ordered locus">M6_Spy0312</name>
</gene>
<organism>
    <name type="scientific">Streptococcus pyogenes serotype M6 (strain ATCC BAA-946 / MGAS10394)</name>
    <dbReference type="NCBI Taxonomy" id="286636"/>
    <lineage>
        <taxon>Bacteria</taxon>
        <taxon>Bacillati</taxon>
        <taxon>Bacillota</taxon>
        <taxon>Bacilli</taxon>
        <taxon>Lactobacillales</taxon>
        <taxon>Streptococcaceae</taxon>
        <taxon>Streptococcus</taxon>
    </lineage>
</organism>
<comment type="function">
    <text evidence="1">Negatively regulates transcription of bacterial ribonucleotide reductase nrd genes and operons by binding to NrdR-boxes.</text>
</comment>
<comment type="cofactor">
    <cofactor evidence="1">
        <name>Zn(2+)</name>
        <dbReference type="ChEBI" id="CHEBI:29105"/>
    </cofactor>
    <text evidence="1">Binds 1 zinc ion.</text>
</comment>
<comment type="similarity">
    <text evidence="1">Belongs to the NrdR family.</text>
</comment>
<protein>
    <recommendedName>
        <fullName evidence="1">Transcriptional repressor NrdR</fullName>
    </recommendedName>
</protein>
<reference key="1">
    <citation type="journal article" date="2004" name="J. Infect. Dis.">
        <title>Progress toward characterization of the group A Streptococcus metagenome: complete genome sequence of a macrolide-resistant serotype M6 strain.</title>
        <authorList>
            <person name="Banks D.J."/>
            <person name="Porcella S.F."/>
            <person name="Barbian K.D."/>
            <person name="Beres S.B."/>
            <person name="Philips L.E."/>
            <person name="Voyich J.M."/>
            <person name="DeLeo F.R."/>
            <person name="Martin J.M."/>
            <person name="Somerville G.A."/>
            <person name="Musser J.M."/>
        </authorList>
    </citation>
    <scope>NUCLEOTIDE SEQUENCE [LARGE SCALE GENOMIC DNA]</scope>
    <source>
        <strain>ATCC BAA-946 / MGAS10394</strain>
    </source>
</reference>
<sequence>MRCPKCNYHKSSVVDSRQAEDGNTIRRRRECEQCHTRFTTFERVEELPLLVIKKDGTREQFSRDKILNGVVQSAQKRPVSSTDIENVISRIEQKVRTTYENEVSSTAIGNLVMDELAELDEITYVRFASVYKSFKDVDEIEELLQQITNRVRGKKKRLNNDETN</sequence>
<name>NRDR_STRP6</name>
<feature type="chain" id="PRO_0000182362" description="Transcriptional repressor NrdR">
    <location>
        <begin position="1"/>
        <end position="164"/>
    </location>
</feature>
<feature type="domain" description="ATP-cone" evidence="1">
    <location>
        <begin position="49"/>
        <end position="139"/>
    </location>
</feature>
<feature type="zinc finger region" evidence="1">
    <location>
        <begin position="3"/>
        <end position="34"/>
    </location>
</feature>
<proteinExistence type="inferred from homology"/>
<accession>Q5XDR6</accession>